<reference key="1">
    <citation type="submission" date="2006-09" db="EMBL/GenBank/DDBJ databases">
        <authorList>
            <consortium name="NIH - Mammalian Gene Collection (MGC) project"/>
        </authorList>
    </citation>
    <scope>NUCLEOTIDE SEQUENCE [LARGE SCALE MRNA]</scope>
    <source>
        <strain>Hereford</strain>
        <tissue>Brain cortex</tissue>
    </source>
</reference>
<comment type="function">
    <text evidence="1">This protein binds the cAMP response element (CRE) (consensus: 5'-GTGACGT[AC][AG]-3'), a sequence present in many viral and cellular promoters. Mediates PKA-induced stimulation of CRE-reporter genes. Represses the expression of FTH1 and other antioxidant detoxification genes. Triggers cell proliferation and transformation (By similarity).</text>
</comment>
<comment type="subunit">
    <text evidence="2">Binds DNA as a dimer. Interacts with HIPK2 and CDK3. Interacts with MOTS-c, a peptide produced by the mitochondrially encoded 12S rRNA MT-RNR1; the interaction occurs in the nucleus following metabolic stress.</text>
</comment>
<comment type="subcellular location">
    <subcellularLocation>
        <location evidence="3 4">Nucleus</location>
    </subcellularLocation>
</comment>
<comment type="PTM">
    <text evidence="1">Phosphorylated at Ser-197 by HIPK2 in response to genotoxic stress. This phosphorylation promotes transcription repression of FTH1 and other antioxidant detoxification genes. The CDK3-mediated phosphorylation at Ser-63 promotes its transactivation and transcriptional activities. Phosphorylated at Ser-63 by RPS6KA4 and RPS6KA5 in response to mitogenic or stress stimuli (By similarity).</text>
</comment>
<comment type="similarity">
    <text evidence="6">Belongs to the bZIP family. ATF subfamily.</text>
</comment>
<accession>Q08DA8</accession>
<dbReference type="EMBL" id="BC123855">
    <property type="protein sequence ID" value="AAI23856.1"/>
    <property type="molecule type" value="mRNA"/>
</dbReference>
<dbReference type="RefSeq" id="NP_001068757.1">
    <property type="nucleotide sequence ID" value="NM_001075289.1"/>
</dbReference>
<dbReference type="RefSeq" id="XP_005206335.1">
    <property type="nucleotide sequence ID" value="XM_005206278.3"/>
</dbReference>
<dbReference type="SMR" id="Q08DA8"/>
<dbReference type="FunCoup" id="Q08DA8">
    <property type="interactions" value="1845"/>
</dbReference>
<dbReference type="STRING" id="9913.ENSBTAP00000058370"/>
<dbReference type="iPTMnet" id="Q08DA8"/>
<dbReference type="PaxDb" id="9913-ENSBTAP00000024135"/>
<dbReference type="Ensembl" id="ENSBTAT00000024135.5">
    <property type="protein sequence ID" value="ENSBTAP00000024135.4"/>
    <property type="gene ID" value="ENSBTAG00000018131.6"/>
</dbReference>
<dbReference type="GeneID" id="506967"/>
<dbReference type="KEGG" id="bta:506967"/>
<dbReference type="CTD" id="466"/>
<dbReference type="VEuPathDB" id="HostDB:ENSBTAG00000018131"/>
<dbReference type="VGNC" id="VGNC:26239">
    <property type="gene designation" value="ATF1"/>
</dbReference>
<dbReference type="eggNOG" id="KOG3584">
    <property type="taxonomic scope" value="Eukaryota"/>
</dbReference>
<dbReference type="GeneTree" id="ENSGT00940000158200"/>
<dbReference type="HOGENOM" id="CLU_042675_1_0_1"/>
<dbReference type="InParanoid" id="Q08DA8"/>
<dbReference type="OrthoDB" id="5970722at2759"/>
<dbReference type="TreeFam" id="TF106464"/>
<dbReference type="Reactome" id="R-BTA-199920">
    <property type="pathway name" value="CREB phosphorylation"/>
</dbReference>
<dbReference type="Proteomes" id="UP000009136">
    <property type="component" value="Chromosome 5"/>
</dbReference>
<dbReference type="Bgee" id="ENSBTAG00000018131">
    <property type="expression patterns" value="Expressed in milk and 105 other cell types or tissues"/>
</dbReference>
<dbReference type="GO" id="GO:1990589">
    <property type="term" value="C:ATF4-CREB1 transcription factor complex"/>
    <property type="evidence" value="ECO:0000318"/>
    <property type="project" value="GO_Central"/>
</dbReference>
<dbReference type="GO" id="GO:0000981">
    <property type="term" value="F:DNA-binding transcription factor activity, RNA polymerase II-specific"/>
    <property type="evidence" value="ECO:0000318"/>
    <property type="project" value="GO_Central"/>
</dbReference>
<dbReference type="GO" id="GO:0000978">
    <property type="term" value="F:RNA polymerase II cis-regulatory region sequence-specific DNA binding"/>
    <property type="evidence" value="ECO:0000318"/>
    <property type="project" value="GO_Central"/>
</dbReference>
<dbReference type="GO" id="GO:0006357">
    <property type="term" value="P:regulation of transcription by RNA polymerase II"/>
    <property type="evidence" value="ECO:0000318"/>
    <property type="project" value="GO_Central"/>
</dbReference>
<dbReference type="CDD" id="cd14690">
    <property type="entry name" value="bZIP_CREB1"/>
    <property type="match status" value="1"/>
</dbReference>
<dbReference type="FunFam" id="1.20.5.170:FF:000003">
    <property type="entry name" value="cAMP-responsive element modulator isoform X2"/>
    <property type="match status" value="1"/>
</dbReference>
<dbReference type="Gene3D" id="1.20.5.170">
    <property type="match status" value="1"/>
</dbReference>
<dbReference type="InterPro" id="IPR004827">
    <property type="entry name" value="bZIP"/>
</dbReference>
<dbReference type="InterPro" id="IPR046347">
    <property type="entry name" value="bZIP_sf"/>
</dbReference>
<dbReference type="InterPro" id="IPR003102">
    <property type="entry name" value="CREB1-like_pKID"/>
</dbReference>
<dbReference type="InterPro" id="IPR001630">
    <property type="entry name" value="Leuzip_CREB"/>
</dbReference>
<dbReference type="PANTHER" id="PTHR45879">
    <property type="entry name" value="CYCLIC AMP RESPONSE ELEMENT-BINDING PROTEIN B"/>
    <property type="match status" value="1"/>
</dbReference>
<dbReference type="PANTHER" id="PTHR45879:SF2">
    <property type="entry name" value="CYCLIC AMP-DEPENDENT TRANSCRIPTION FACTOR ATF-1"/>
    <property type="match status" value="1"/>
</dbReference>
<dbReference type="Pfam" id="PF00170">
    <property type="entry name" value="bZIP_1"/>
    <property type="match status" value="1"/>
</dbReference>
<dbReference type="Pfam" id="PF02173">
    <property type="entry name" value="pKID"/>
    <property type="match status" value="1"/>
</dbReference>
<dbReference type="PRINTS" id="PR00041">
    <property type="entry name" value="LEUZIPPRCREB"/>
</dbReference>
<dbReference type="SMART" id="SM00338">
    <property type="entry name" value="BRLZ"/>
    <property type="match status" value="1"/>
</dbReference>
<dbReference type="SUPFAM" id="SSF57959">
    <property type="entry name" value="Leucine zipper domain"/>
    <property type="match status" value="1"/>
</dbReference>
<dbReference type="PROSITE" id="PS50217">
    <property type="entry name" value="BZIP"/>
    <property type="match status" value="1"/>
</dbReference>
<dbReference type="PROSITE" id="PS00036">
    <property type="entry name" value="BZIP_BASIC"/>
    <property type="match status" value="1"/>
</dbReference>
<dbReference type="PROSITE" id="PS50953">
    <property type="entry name" value="KID"/>
    <property type="match status" value="1"/>
</dbReference>
<organism>
    <name type="scientific">Bos taurus</name>
    <name type="common">Bovine</name>
    <dbReference type="NCBI Taxonomy" id="9913"/>
    <lineage>
        <taxon>Eukaryota</taxon>
        <taxon>Metazoa</taxon>
        <taxon>Chordata</taxon>
        <taxon>Craniata</taxon>
        <taxon>Vertebrata</taxon>
        <taxon>Euteleostomi</taxon>
        <taxon>Mammalia</taxon>
        <taxon>Eutheria</taxon>
        <taxon>Laurasiatheria</taxon>
        <taxon>Artiodactyla</taxon>
        <taxon>Ruminantia</taxon>
        <taxon>Pecora</taxon>
        <taxon>Bovidae</taxon>
        <taxon>Bovinae</taxon>
        <taxon>Bos</taxon>
    </lineage>
</organism>
<keyword id="KW-0010">Activator</keyword>
<keyword id="KW-0238">DNA-binding</keyword>
<keyword id="KW-1017">Isopeptide bond</keyword>
<keyword id="KW-0539">Nucleus</keyword>
<keyword id="KW-0597">Phosphoprotein</keyword>
<keyword id="KW-1185">Reference proteome</keyword>
<keyword id="KW-0804">Transcription</keyword>
<keyword id="KW-0805">Transcription regulation</keyword>
<keyword id="KW-0832">Ubl conjugation</keyword>
<proteinExistence type="evidence at transcript level"/>
<feature type="chain" id="PRO_0000285214" description="Cyclic AMP-dependent transcription factor ATF-1">
    <location>
        <begin position="1"/>
        <end position="270"/>
    </location>
</feature>
<feature type="domain" description="KID" evidence="3">
    <location>
        <begin position="31"/>
        <end position="90"/>
    </location>
</feature>
<feature type="domain" description="bZIP" evidence="4">
    <location>
        <begin position="212"/>
        <end position="270"/>
    </location>
</feature>
<feature type="region of interest" description="Disordered" evidence="5">
    <location>
        <begin position="1"/>
        <end position="91"/>
    </location>
</feature>
<feature type="region of interest" description="Basic motif" evidence="4">
    <location>
        <begin position="214"/>
        <end position="238"/>
    </location>
</feature>
<feature type="region of interest" description="Leucine-zipper" evidence="4">
    <location>
        <begin position="240"/>
        <end position="261"/>
    </location>
</feature>
<feature type="compositionally biased region" description="Polar residues" evidence="5">
    <location>
        <begin position="9"/>
        <end position="21"/>
    </location>
</feature>
<feature type="compositionally biased region" description="Basic and acidic residues" evidence="5">
    <location>
        <begin position="67"/>
        <end position="83"/>
    </location>
</feature>
<feature type="modified residue" description="Phosphoserine; by CaMK1, CDK3, RPS6KA4 and RPS6KA5" evidence="2 3">
    <location>
        <position position="63"/>
    </location>
</feature>
<feature type="modified residue" description="Phosphoserine; by HIPK2" evidence="2 3">
    <location>
        <position position="197"/>
    </location>
</feature>
<feature type="cross-link" description="Glycyl lysine isopeptide (Lys-Gly) (interchain with G-Cter in SUMO2)" evidence="2">
    <location>
        <position position="207"/>
    </location>
</feature>
<feature type="cross-link" description="Glycyl lysine isopeptide (Lys-Gly) (interchain with G-Cter in SUMO2)" evidence="2">
    <location>
        <position position="214"/>
    </location>
</feature>
<protein>
    <recommendedName>
        <fullName>Cyclic AMP-dependent transcription factor ATF-1</fullName>
        <shortName>cAMP-dependent transcription factor ATF-1</shortName>
    </recommendedName>
    <alternativeName>
        <fullName>Activating transcription factor 1</fullName>
    </alternativeName>
</protein>
<evidence type="ECO:0000250" key="1"/>
<evidence type="ECO:0000250" key="2">
    <source>
        <dbReference type="UniProtKB" id="P18846"/>
    </source>
</evidence>
<evidence type="ECO:0000255" key="3">
    <source>
        <dbReference type="PROSITE-ProRule" id="PRU00312"/>
    </source>
</evidence>
<evidence type="ECO:0000255" key="4">
    <source>
        <dbReference type="PROSITE-ProRule" id="PRU00978"/>
    </source>
</evidence>
<evidence type="ECO:0000256" key="5">
    <source>
        <dbReference type="SAM" id="MobiDB-lite"/>
    </source>
</evidence>
<evidence type="ECO:0000305" key="6"/>
<sequence length="270" mass="29261">MEDSHKSNTSETAPQSGSTVQAAHISHIAQQVSSLSESEESQDSSDSIGSSQKTHGILARRPSYRKILKDLSSEDIRGRKGDGENPGVSAVTSMSVPTPIYQTSTGQYIAIAPNGALQLASPGTDGVQGLQTLTMTNSGSTQQGTTILQYAQTSDGQQILVPSNQVVVQTASGDMQTYQIRTTPSATSLPQTVVMTSPVTLTSQTSKTDDPQLKREIRLMKNREAARECRRKKKEYVKCLENRVAVLENQNKTLIEELKTLKDLYSNKSV</sequence>
<name>ATF1_BOVIN</name>
<gene>
    <name type="primary">ATF1</name>
</gene>